<keyword id="KW-0324">Glycolysis</keyword>
<keyword id="KW-0413">Isomerase</keyword>
<keyword id="KW-0464">Manganese</keyword>
<keyword id="KW-0479">Metal-binding</keyword>
<keyword id="KW-1185">Reference proteome</keyword>
<name>GPMI_ACET2</name>
<protein>
    <recommendedName>
        <fullName evidence="1">2,3-bisphosphoglycerate-independent phosphoglycerate mutase</fullName>
        <shortName evidence="1">BPG-independent PGAM</shortName>
        <shortName evidence="1">Phosphoglyceromutase</shortName>
        <shortName evidence="1">iPGM</shortName>
        <ecNumber evidence="1">5.4.2.12</ecNumber>
    </recommendedName>
</protein>
<gene>
    <name evidence="1" type="primary">gpmI</name>
    <name type="ordered locus">Cthe_0140</name>
</gene>
<evidence type="ECO:0000255" key="1">
    <source>
        <dbReference type="HAMAP-Rule" id="MF_01038"/>
    </source>
</evidence>
<dbReference type="EC" id="5.4.2.12" evidence="1"/>
<dbReference type="EMBL" id="CP000568">
    <property type="protein sequence ID" value="ABN51381.1"/>
    <property type="molecule type" value="Genomic_DNA"/>
</dbReference>
<dbReference type="RefSeq" id="WP_003512175.1">
    <property type="nucleotide sequence ID" value="NC_009012.1"/>
</dbReference>
<dbReference type="SMR" id="A3DBQ2"/>
<dbReference type="STRING" id="203119.Cthe_0140"/>
<dbReference type="GeneID" id="35803784"/>
<dbReference type="KEGG" id="cth:Cthe_0140"/>
<dbReference type="eggNOG" id="COG0696">
    <property type="taxonomic scope" value="Bacteria"/>
</dbReference>
<dbReference type="HOGENOM" id="CLU_026099_2_0_9"/>
<dbReference type="OrthoDB" id="9800863at2"/>
<dbReference type="UniPathway" id="UPA00109">
    <property type="reaction ID" value="UER00186"/>
</dbReference>
<dbReference type="Proteomes" id="UP000002145">
    <property type="component" value="Chromosome"/>
</dbReference>
<dbReference type="GO" id="GO:0005829">
    <property type="term" value="C:cytosol"/>
    <property type="evidence" value="ECO:0007669"/>
    <property type="project" value="TreeGrafter"/>
</dbReference>
<dbReference type="GO" id="GO:0030145">
    <property type="term" value="F:manganese ion binding"/>
    <property type="evidence" value="ECO:0007669"/>
    <property type="project" value="UniProtKB-UniRule"/>
</dbReference>
<dbReference type="GO" id="GO:0004619">
    <property type="term" value="F:phosphoglycerate mutase activity"/>
    <property type="evidence" value="ECO:0007669"/>
    <property type="project" value="UniProtKB-EC"/>
</dbReference>
<dbReference type="GO" id="GO:0006007">
    <property type="term" value="P:glucose catabolic process"/>
    <property type="evidence" value="ECO:0007669"/>
    <property type="project" value="InterPro"/>
</dbReference>
<dbReference type="GO" id="GO:0006096">
    <property type="term" value="P:glycolytic process"/>
    <property type="evidence" value="ECO:0007669"/>
    <property type="project" value="UniProtKB-UniRule"/>
</dbReference>
<dbReference type="CDD" id="cd16010">
    <property type="entry name" value="iPGM"/>
    <property type="match status" value="1"/>
</dbReference>
<dbReference type="FunFam" id="3.40.1450.10:FF:000001">
    <property type="entry name" value="2,3-bisphosphoglycerate-independent phosphoglycerate mutase"/>
    <property type="match status" value="1"/>
</dbReference>
<dbReference type="FunFam" id="3.40.720.10:FF:000001">
    <property type="entry name" value="2,3-bisphosphoglycerate-independent phosphoglycerate mutase"/>
    <property type="match status" value="1"/>
</dbReference>
<dbReference type="Gene3D" id="3.40.720.10">
    <property type="entry name" value="Alkaline Phosphatase, subunit A"/>
    <property type="match status" value="1"/>
</dbReference>
<dbReference type="Gene3D" id="3.40.1450.10">
    <property type="entry name" value="BPG-independent phosphoglycerate mutase, domain B"/>
    <property type="match status" value="1"/>
</dbReference>
<dbReference type="HAMAP" id="MF_01038">
    <property type="entry name" value="GpmI"/>
    <property type="match status" value="1"/>
</dbReference>
<dbReference type="InterPro" id="IPR017850">
    <property type="entry name" value="Alkaline_phosphatase_core_sf"/>
</dbReference>
<dbReference type="InterPro" id="IPR011258">
    <property type="entry name" value="BPG-indep_PGM_N"/>
</dbReference>
<dbReference type="InterPro" id="IPR006124">
    <property type="entry name" value="Metalloenzyme"/>
</dbReference>
<dbReference type="InterPro" id="IPR036646">
    <property type="entry name" value="PGAM_B_sf"/>
</dbReference>
<dbReference type="InterPro" id="IPR005995">
    <property type="entry name" value="Pgm_bpd_ind"/>
</dbReference>
<dbReference type="NCBIfam" id="TIGR01307">
    <property type="entry name" value="pgm_bpd_ind"/>
    <property type="match status" value="1"/>
</dbReference>
<dbReference type="PANTHER" id="PTHR31637">
    <property type="entry name" value="2,3-BISPHOSPHOGLYCERATE-INDEPENDENT PHOSPHOGLYCERATE MUTASE"/>
    <property type="match status" value="1"/>
</dbReference>
<dbReference type="PANTHER" id="PTHR31637:SF0">
    <property type="entry name" value="2,3-BISPHOSPHOGLYCERATE-INDEPENDENT PHOSPHOGLYCERATE MUTASE"/>
    <property type="match status" value="1"/>
</dbReference>
<dbReference type="Pfam" id="PF06415">
    <property type="entry name" value="iPGM_N"/>
    <property type="match status" value="1"/>
</dbReference>
<dbReference type="Pfam" id="PF01676">
    <property type="entry name" value="Metalloenzyme"/>
    <property type="match status" value="1"/>
</dbReference>
<dbReference type="PIRSF" id="PIRSF001492">
    <property type="entry name" value="IPGAM"/>
    <property type="match status" value="1"/>
</dbReference>
<dbReference type="SUPFAM" id="SSF64158">
    <property type="entry name" value="2,3-Bisphosphoglycerate-independent phosphoglycerate mutase, substrate-binding domain"/>
    <property type="match status" value="1"/>
</dbReference>
<dbReference type="SUPFAM" id="SSF53649">
    <property type="entry name" value="Alkaline phosphatase-like"/>
    <property type="match status" value="1"/>
</dbReference>
<proteinExistence type="inferred from homology"/>
<feature type="chain" id="PRO_1000063959" description="2,3-bisphosphoglycerate-independent phosphoglycerate mutase">
    <location>
        <begin position="1"/>
        <end position="511"/>
    </location>
</feature>
<feature type="active site" description="Phosphoserine intermediate" evidence="1">
    <location>
        <position position="62"/>
    </location>
</feature>
<feature type="binding site" evidence="1">
    <location>
        <position position="12"/>
    </location>
    <ligand>
        <name>Mn(2+)</name>
        <dbReference type="ChEBI" id="CHEBI:29035"/>
        <label>2</label>
    </ligand>
</feature>
<feature type="binding site" evidence="1">
    <location>
        <position position="62"/>
    </location>
    <ligand>
        <name>Mn(2+)</name>
        <dbReference type="ChEBI" id="CHEBI:29035"/>
        <label>2</label>
    </ligand>
</feature>
<feature type="binding site" evidence="1">
    <location>
        <position position="123"/>
    </location>
    <ligand>
        <name>substrate</name>
    </ligand>
</feature>
<feature type="binding site" evidence="1">
    <location>
        <begin position="153"/>
        <end position="154"/>
    </location>
    <ligand>
        <name>substrate</name>
    </ligand>
</feature>
<feature type="binding site" evidence="1">
    <location>
        <position position="185"/>
    </location>
    <ligand>
        <name>substrate</name>
    </ligand>
</feature>
<feature type="binding site" evidence="1">
    <location>
        <position position="191"/>
    </location>
    <ligand>
        <name>substrate</name>
    </ligand>
</feature>
<feature type="binding site" evidence="1">
    <location>
        <begin position="260"/>
        <end position="263"/>
    </location>
    <ligand>
        <name>substrate</name>
    </ligand>
</feature>
<feature type="binding site" evidence="1">
    <location>
        <position position="335"/>
    </location>
    <ligand>
        <name>substrate</name>
    </ligand>
</feature>
<feature type="binding site" evidence="1">
    <location>
        <position position="402"/>
    </location>
    <ligand>
        <name>Mn(2+)</name>
        <dbReference type="ChEBI" id="CHEBI:29035"/>
        <label>1</label>
    </ligand>
</feature>
<feature type="binding site" evidence="1">
    <location>
        <position position="406"/>
    </location>
    <ligand>
        <name>Mn(2+)</name>
        <dbReference type="ChEBI" id="CHEBI:29035"/>
        <label>1</label>
    </ligand>
</feature>
<feature type="binding site" evidence="1">
    <location>
        <position position="443"/>
    </location>
    <ligand>
        <name>Mn(2+)</name>
        <dbReference type="ChEBI" id="CHEBI:29035"/>
        <label>2</label>
    </ligand>
</feature>
<feature type="binding site" evidence="1">
    <location>
        <position position="444"/>
    </location>
    <ligand>
        <name>Mn(2+)</name>
        <dbReference type="ChEBI" id="CHEBI:29035"/>
        <label>2</label>
    </ligand>
</feature>
<feature type="binding site" evidence="1">
    <location>
        <position position="462"/>
    </location>
    <ligand>
        <name>Mn(2+)</name>
        <dbReference type="ChEBI" id="CHEBI:29035"/>
        <label>1</label>
    </ligand>
</feature>
<accession>A3DBQ2</accession>
<comment type="function">
    <text evidence="1">Catalyzes the interconversion of 2-phosphoglycerate and 3-phosphoglycerate.</text>
</comment>
<comment type="catalytic activity">
    <reaction evidence="1">
        <text>(2R)-2-phosphoglycerate = (2R)-3-phosphoglycerate</text>
        <dbReference type="Rhea" id="RHEA:15901"/>
        <dbReference type="ChEBI" id="CHEBI:58272"/>
        <dbReference type="ChEBI" id="CHEBI:58289"/>
        <dbReference type="EC" id="5.4.2.12"/>
    </reaction>
</comment>
<comment type="cofactor">
    <cofactor evidence="1">
        <name>Mn(2+)</name>
        <dbReference type="ChEBI" id="CHEBI:29035"/>
    </cofactor>
    <text evidence="1">Binds 2 manganese ions per subunit.</text>
</comment>
<comment type="pathway">
    <text evidence="1">Carbohydrate degradation; glycolysis; pyruvate from D-glyceraldehyde 3-phosphate: step 3/5.</text>
</comment>
<comment type="subunit">
    <text evidence="1">Monomer.</text>
</comment>
<comment type="similarity">
    <text evidence="1">Belongs to the BPG-independent phosphoglycerate mutase family.</text>
</comment>
<organism>
    <name type="scientific">Acetivibrio thermocellus (strain ATCC 27405 / DSM 1237 / JCM 9322 / NBRC 103400 / NCIMB 10682 / NRRL B-4536 / VPI 7372)</name>
    <name type="common">Clostridium thermocellum</name>
    <dbReference type="NCBI Taxonomy" id="203119"/>
    <lineage>
        <taxon>Bacteria</taxon>
        <taxon>Bacillati</taxon>
        <taxon>Bacillota</taxon>
        <taxon>Clostridia</taxon>
        <taxon>Eubacteriales</taxon>
        <taxon>Oscillospiraceae</taxon>
        <taxon>Acetivibrio</taxon>
    </lineage>
</organism>
<reference key="1">
    <citation type="submission" date="2007-02" db="EMBL/GenBank/DDBJ databases">
        <title>Complete sequence of Clostridium thermocellum ATCC 27405.</title>
        <authorList>
            <consortium name="US DOE Joint Genome Institute"/>
            <person name="Copeland A."/>
            <person name="Lucas S."/>
            <person name="Lapidus A."/>
            <person name="Barry K."/>
            <person name="Detter J.C."/>
            <person name="Glavina del Rio T."/>
            <person name="Hammon N."/>
            <person name="Israni S."/>
            <person name="Dalin E."/>
            <person name="Tice H."/>
            <person name="Pitluck S."/>
            <person name="Chertkov O."/>
            <person name="Brettin T."/>
            <person name="Bruce D."/>
            <person name="Han C."/>
            <person name="Tapia R."/>
            <person name="Gilna P."/>
            <person name="Schmutz J."/>
            <person name="Larimer F."/>
            <person name="Land M."/>
            <person name="Hauser L."/>
            <person name="Kyrpides N."/>
            <person name="Mikhailova N."/>
            <person name="Wu J.H.D."/>
            <person name="Newcomb M."/>
            <person name="Richardson P."/>
        </authorList>
    </citation>
    <scope>NUCLEOTIDE SEQUENCE [LARGE SCALE GENOMIC DNA]</scope>
    <source>
        <strain>ATCC 27405 / DSM 1237 / JCM 9322 / NBRC 103400 / NCIMB 10682 / NRRL B-4536 / VPI 7372</strain>
    </source>
</reference>
<sequence length="511" mass="57366">MKDKLVMLIILDGYGINPRKEGNAIEAANKPNIDRFMREYPNTIVRTSGMDVGLPDGQMGNSEVGHTNIGAGRIVYQELTRITKSIQDGDFFEKKEFLDAAENCRKHNSKLHLFGLLSDGGVHSHNTHLYGLLEFAKRQNLKDVYVHCFFDGRDVPPDSAMGYVEELENKIREIGVGEIATVMGRYYAMDRDNRWERVKLAYDAMVLGRGNQAQSAKEAVAESYKRQEFDEFVKPTVIMKNGSPVATVGENDSIIFFNFRPDRAREITRAFTEVNFSGFEREKGYFPVFFVCMTQYDKTFENVVVAFKPESLENTFGEYISKKGLRQLRIAETEKYAHVTFFFNGGVEAVYEGEDRILINSPKVATYDLKPEMSAYEVTDKVLECINKKEYDVIILNYANPDMVGHTGVFEAAKAAIEAIDECLGKVVPAVLEQNGVVLITADHGNSEQMIDYETGGPFTAHTTNPVPLIVIGLGDVKLREGRLADLAPTMLDILGFEKPKEMTGESLIVK</sequence>